<feature type="chain" id="PRO_0000372244" description="Putative antiporter subunit mnhD2">
    <location>
        <begin position="1"/>
        <end position="499"/>
    </location>
</feature>
<feature type="transmembrane region" description="Helical" evidence="2">
    <location>
        <begin position="1"/>
        <end position="21"/>
    </location>
</feature>
<feature type="transmembrane region" description="Helical" evidence="2">
    <location>
        <begin position="31"/>
        <end position="51"/>
    </location>
</feature>
<feature type="transmembrane region" description="Helical" evidence="2">
    <location>
        <begin position="77"/>
        <end position="97"/>
    </location>
</feature>
<feature type="transmembrane region" description="Helical" evidence="2">
    <location>
        <begin position="107"/>
        <end position="127"/>
    </location>
</feature>
<feature type="transmembrane region" description="Helical" evidence="2">
    <location>
        <begin position="129"/>
        <end position="149"/>
    </location>
</feature>
<feature type="transmembrane region" description="Helical" evidence="2">
    <location>
        <begin position="160"/>
        <end position="180"/>
    </location>
</feature>
<feature type="transmembrane region" description="Helical" evidence="2">
    <location>
        <begin position="208"/>
        <end position="228"/>
    </location>
</feature>
<feature type="transmembrane region" description="Helical" evidence="2">
    <location>
        <begin position="239"/>
        <end position="259"/>
    </location>
</feature>
<feature type="transmembrane region" description="Helical" evidence="2">
    <location>
        <begin position="272"/>
        <end position="292"/>
    </location>
</feature>
<feature type="transmembrane region" description="Helical" evidence="2">
    <location>
        <begin position="307"/>
        <end position="327"/>
    </location>
</feature>
<feature type="transmembrane region" description="Helical" evidence="2">
    <location>
        <begin position="329"/>
        <end position="349"/>
    </location>
</feature>
<feature type="transmembrane region" description="Helical" evidence="2">
    <location>
        <begin position="367"/>
        <end position="387"/>
    </location>
</feature>
<feature type="transmembrane region" description="Helical" evidence="2">
    <location>
        <begin position="402"/>
        <end position="422"/>
    </location>
</feature>
<feature type="transmembrane region" description="Helical" evidence="2">
    <location>
        <begin position="449"/>
        <end position="469"/>
    </location>
</feature>
<sequence length="499" mass="55079">MSNLIILPMLLPFVCALILVFTKNKNRISKILSITTMIVNTMISIALLIYVVNHKPITLDFGGWKAPFGIQFLGDSLSLLMVSVSSFVVTLIMAYGFGRGEKRVNRFHLPTFILLLTVGVIGSFLTSDLFNLYVMFEIMLLASFVLVTLGQSVEQLRAAIVYVVLNILGSWLLLLGIGMLYKTVGTLNFSHLAMRLNHMENNQTITMISLVFLVAFSSKAALVIFMWLPKAYAVLNTELAALFAALMTKVGAYALIRFFTLLFDHHPSVTHTLLVFMACITMIIGAFGVIAYKDIKKIAAYQVILSIGFIILGLGSHTISGVNGAIFYLANDIIVKTLLFFVIGSLVYMSGYRNYQYLSGLAKREPFFGVAFVVVIFAIGGVPPFSGFPGKVLIFQGAITNGNYIGLALMIVTSLIAMYSLFRVMFIMYFGDADGEQVQFRPLPIYRKGLLSVLVVVVLAMGIAAPVVLKVTEDATNLNMKEDVFQKNVNTHLKEVNHK</sequence>
<proteinExistence type="inferred from homology"/>
<evidence type="ECO:0000250" key="1"/>
<evidence type="ECO:0000255" key="2"/>
<evidence type="ECO:0000305" key="3"/>
<comment type="subunit">
    <text evidence="1">May form a heterooligomeric complex that consists of seven subunits: mnhA2, mnhB2, mnhC2, mnhD2, mnhE2, mnhF2 and mnhG2.</text>
</comment>
<comment type="subcellular location">
    <subcellularLocation>
        <location evidence="3">Cell membrane</location>
        <topology evidence="3">Multi-pass membrane protein</topology>
    </subcellularLocation>
</comment>
<comment type="similarity">
    <text evidence="3">Belongs to the CPA3 antiporters (TC 2.A.63) subunit D family.</text>
</comment>
<dbReference type="EMBL" id="CP000029">
    <property type="protein sequence ID" value="AAW53727.1"/>
    <property type="molecule type" value="Genomic_DNA"/>
</dbReference>
<dbReference type="SMR" id="Q5HRA9"/>
<dbReference type="STRING" id="176279.SERP0284"/>
<dbReference type="KEGG" id="ser:SERP0284"/>
<dbReference type="eggNOG" id="COG0651">
    <property type="taxonomic scope" value="Bacteria"/>
</dbReference>
<dbReference type="HOGENOM" id="CLU_007100_9_2_9"/>
<dbReference type="Proteomes" id="UP000000531">
    <property type="component" value="Chromosome"/>
</dbReference>
<dbReference type="GO" id="GO:0005886">
    <property type="term" value="C:plasma membrane"/>
    <property type="evidence" value="ECO:0007669"/>
    <property type="project" value="UniProtKB-SubCell"/>
</dbReference>
<dbReference type="GO" id="GO:0015297">
    <property type="term" value="F:antiporter activity"/>
    <property type="evidence" value="ECO:0007669"/>
    <property type="project" value="UniProtKB-KW"/>
</dbReference>
<dbReference type="GO" id="GO:0008137">
    <property type="term" value="F:NADH dehydrogenase (ubiquinone) activity"/>
    <property type="evidence" value="ECO:0007669"/>
    <property type="project" value="InterPro"/>
</dbReference>
<dbReference type="GO" id="GO:0042773">
    <property type="term" value="P:ATP synthesis coupled electron transport"/>
    <property type="evidence" value="ECO:0007669"/>
    <property type="project" value="InterPro"/>
</dbReference>
<dbReference type="InterPro" id="IPR050586">
    <property type="entry name" value="CPA3_Na-H_Antiporter_D"/>
</dbReference>
<dbReference type="InterPro" id="IPR003918">
    <property type="entry name" value="NADH_UbQ_OxRdtase"/>
</dbReference>
<dbReference type="InterPro" id="IPR001750">
    <property type="entry name" value="ND/Mrp_TM"/>
</dbReference>
<dbReference type="NCBIfam" id="NF009306">
    <property type="entry name" value="PRK12663.1"/>
    <property type="match status" value="1"/>
</dbReference>
<dbReference type="PANTHER" id="PTHR42703:SF1">
    <property type="entry name" value="NA(+)_H(+) ANTIPORTER SUBUNIT D1"/>
    <property type="match status" value="1"/>
</dbReference>
<dbReference type="PANTHER" id="PTHR42703">
    <property type="entry name" value="NADH DEHYDROGENASE"/>
    <property type="match status" value="1"/>
</dbReference>
<dbReference type="Pfam" id="PF00361">
    <property type="entry name" value="Proton_antipo_M"/>
    <property type="match status" value="1"/>
</dbReference>
<dbReference type="PRINTS" id="PR01437">
    <property type="entry name" value="NUOXDRDTASE4"/>
</dbReference>
<keyword id="KW-0050">Antiport</keyword>
<keyword id="KW-1003">Cell membrane</keyword>
<keyword id="KW-0406">Ion transport</keyword>
<keyword id="KW-0472">Membrane</keyword>
<keyword id="KW-1185">Reference proteome</keyword>
<keyword id="KW-0812">Transmembrane</keyword>
<keyword id="KW-1133">Transmembrane helix</keyword>
<keyword id="KW-0813">Transport</keyword>
<gene>
    <name type="primary">mnhD2</name>
    <name type="synonym">mrpD2</name>
    <name type="ordered locus">SERP0284</name>
</gene>
<organism>
    <name type="scientific">Staphylococcus epidermidis (strain ATCC 35984 / DSM 28319 / BCRC 17069 / CCUG 31568 / BM 3577 / RP62A)</name>
    <dbReference type="NCBI Taxonomy" id="176279"/>
    <lineage>
        <taxon>Bacteria</taxon>
        <taxon>Bacillati</taxon>
        <taxon>Bacillota</taxon>
        <taxon>Bacilli</taxon>
        <taxon>Bacillales</taxon>
        <taxon>Staphylococcaceae</taxon>
        <taxon>Staphylococcus</taxon>
    </lineage>
</organism>
<reference key="1">
    <citation type="journal article" date="2005" name="J. Bacteriol.">
        <title>Insights on evolution of virulence and resistance from the complete genome analysis of an early methicillin-resistant Staphylococcus aureus strain and a biofilm-producing methicillin-resistant Staphylococcus epidermidis strain.</title>
        <authorList>
            <person name="Gill S.R."/>
            <person name="Fouts D.E."/>
            <person name="Archer G.L."/>
            <person name="Mongodin E.F."/>
            <person name="DeBoy R.T."/>
            <person name="Ravel J."/>
            <person name="Paulsen I.T."/>
            <person name="Kolonay J.F."/>
            <person name="Brinkac L.M."/>
            <person name="Beanan M.J."/>
            <person name="Dodson R.J."/>
            <person name="Daugherty S.C."/>
            <person name="Madupu R."/>
            <person name="Angiuoli S.V."/>
            <person name="Durkin A.S."/>
            <person name="Haft D.H."/>
            <person name="Vamathevan J.J."/>
            <person name="Khouri H."/>
            <person name="Utterback T.R."/>
            <person name="Lee C."/>
            <person name="Dimitrov G."/>
            <person name="Jiang L."/>
            <person name="Qin H."/>
            <person name="Weidman J."/>
            <person name="Tran K."/>
            <person name="Kang K.H."/>
            <person name="Hance I.R."/>
            <person name="Nelson K.E."/>
            <person name="Fraser C.M."/>
        </authorList>
    </citation>
    <scope>NUCLEOTIDE SEQUENCE [LARGE SCALE GENOMIC DNA]</scope>
    <source>
        <strain>ATCC 35984 / DSM 28319 / BCRC 17069 / CCUG 31568 / BM 3577 / RP62A</strain>
    </source>
</reference>
<accession>Q5HRA9</accession>
<name>MNHD2_STAEQ</name>
<protein>
    <recommendedName>
        <fullName>Putative antiporter subunit mnhD2</fullName>
    </recommendedName>
    <alternativeName>
        <fullName>Mrp complex subunit D2</fullName>
    </alternativeName>
    <alternativeName>
        <fullName>Putative NADH-ubiquinone oxidoreductase subunit mnhD2</fullName>
    </alternativeName>
</protein>